<comment type="function">
    <text evidence="3 9">Catalyzes the oxidation of methanethiol, an organosulfur compound known to be produced in substantial amounts by gut bacteria (PubMed:29255262). Selenium-binding protein which may be involved in the sensing of reactive xenobiotics in the cytoplasm. May be involved in intra-Golgi protein transport (By similarity).</text>
</comment>
<comment type="catalytic activity">
    <reaction evidence="9">
        <text>methanethiol + O2 + H2O = hydrogen sulfide + formaldehyde + H2O2 + H(+)</text>
        <dbReference type="Rhea" id="RHEA:11812"/>
        <dbReference type="ChEBI" id="CHEBI:15377"/>
        <dbReference type="ChEBI" id="CHEBI:15378"/>
        <dbReference type="ChEBI" id="CHEBI:15379"/>
        <dbReference type="ChEBI" id="CHEBI:16007"/>
        <dbReference type="ChEBI" id="CHEBI:16240"/>
        <dbReference type="ChEBI" id="CHEBI:16842"/>
        <dbReference type="ChEBI" id="CHEBI:29919"/>
        <dbReference type="EC" id="1.8.3.4"/>
    </reaction>
</comment>
<comment type="biophysicochemical properties">
    <kinetics>
        <KM evidence="9">4.8 nM for methanethiol</KM>
    </kinetics>
</comment>
<comment type="pathway">
    <text evidence="9">Organosulfur degradation.</text>
</comment>
<comment type="subunit">
    <text evidence="8">Interacts with USP33.</text>
</comment>
<comment type="interaction">
    <interactant intactId="EBI-711619">
        <id>Q13228</id>
    </interactant>
    <interactant intactId="EBI-19157918">
        <id>Q9UJ68</id>
        <label>MSRA</label>
    </interactant>
    <organismsDiffer>false</organismsDiffer>
    <experiments>3</experiments>
</comment>
<comment type="interaction">
    <interactant intactId="EBI-711619">
        <id>Q13228</id>
    </interactant>
    <interactant intactId="EBI-2828217">
        <id>O43422</id>
        <label>THAP12</label>
    </interactant>
    <organismsDiffer>false</organismsDiffer>
    <experiments>3</experiments>
</comment>
<comment type="interaction">
    <interactant intactId="EBI-711619">
        <id>Q13228</id>
    </interactant>
    <interactant intactId="EBI-358993">
        <id>Q15645</id>
        <label>TRIP13</label>
    </interactant>
    <organismsDiffer>false</organismsDiffer>
    <experiments>6</experiments>
</comment>
<comment type="interaction">
    <interactant intactId="EBI-711619">
        <id>Q13228</id>
    </interactant>
    <interactant intactId="EBI-719307">
        <id>Q8TEY7-2</id>
        <label>USP33</label>
    </interactant>
    <organismsDiffer>false</organismsDiffer>
    <experiments>5</experiments>
</comment>
<comment type="subcellular location">
    <subcellularLocation>
        <location evidence="4">Nucleus</location>
    </subcellularLocation>
    <subcellularLocation>
        <location evidence="4 5">Cytoplasm</location>
        <location evidence="4 5">Cytosol</location>
    </subcellularLocation>
    <subcellularLocation>
        <location evidence="3">Membrane</location>
        <topology evidence="3">Peripheral membrane protein</topology>
    </subcellularLocation>
    <text evidence="3">May associate with Golgi membrane (By similarity). May associate with the membrane of autophagosomes (By similarity).</text>
</comment>
<comment type="alternative products">
    <event type="alternative splicing"/>
    <isoform>
        <id>Q13228-1</id>
        <name>1</name>
        <sequence type="displayed"/>
    </isoform>
    <isoform>
        <id>Q13228-2</id>
        <name>2</name>
        <sequence type="described" ref="VSP_038440"/>
    </isoform>
    <isoform>
        <id>Q13228-3</id>
        <name>3</name>
        <sequence type="described" ref="VSP_045425"/>
    </isoform>
    <isoform>
        <id>Q13228-4</id>
        <name>4</name>
        <sequence type="described" ref="VSP_055126"/>
    </isoform>
</comment>
<comment type="tissue specificity">
    <text evidence="4 5 6 7 9 10">Widely expressed. Highly expressed in liver, lung, colon, prostate, kidney and pancreas. In brain, present both in neurons and glia (at protein level). Down-regulated in lung adenocarcinoma, colorectal carcinoma and ovarian cancer. Two-fold up-regulated in brain and blood from schizophrenia patients.</text>
</comment>
<comment type="induction">
    <text evidence="10">Down-regulated by androgen in prostate cancer cells.</text>
</comment>
<comment type="PTM">
    <text evidence="15">Phosphorylated.</text>
</comment>
<comment type="PTM">
    <text evidence="1">The N-terminus is blocked.</text>
</comment>
<comment type="disease" evidence="9">
    <disease id="DI-05353">
        <name>Extraoral halitosis due to methanethiol oxidase deficiency</name>
        <acronym>EHMTO</acronym>
        <description>An autosomal recessive malodor condition characterized by extraoral blood-borne halitosis resulting from the accumulation of sulfur-containing metabolites. In extraoral blood-borne halitosis, malodorant compounds are carried to the lungs, where they enter the breath. Affected individuals have a cabbage-like breath odor, high levels of methanethiol and dimethylsulfide in oral and nasal breath, and elevated urinary excretion of dimethylsulfoxide in the absence of intake of dimethylsulfide-containing food or use of sulfur-containing medication, lower-gastrointestinal problems, and known metabolic defects, such as methionine adenosyltransferase deficiency and tyrosinemia.</description>
        <dbReference type="MIM" id="618148"/>
    </disease>
    <text>The disease is caused by variants affecting the gene represented in this entry.</text>
</comment>
<comment type="similarity">
    <text evidence="14">Belongs to the selenium-binding protein family.</text>
</comment>
<name>SBP1_HUMAN</name>
<evidence type="ECO:0000250" key="1"/>
<evidence type="ECO:0000250" key="2">
    <source>
        <dbReference type="UniProtKB" id="P17563"/>
    </source>
</evidence>
<evidence type="ECO:0000250" key="3">
    <source>
        <dbReference type="UniProtKB" id="Q8VIF7"/>
    </source>
</evidence>
<evidence type="ECO:0000269" key="4">
    <source>
    </source>
</evidence>
<evidence type="ECO:0000269" key="5">
    <source>
    </source>
</evidence>
<evidence type="ECO:0000269" key="6">
    <source>
    </source>
</evidence>
<evidence type="ECO:0000269" key="7">
    <source>
    </source>
</evidence>
<evidence type="ECO:0000269" key="8">
    <source>
    </source>
</evidence>
<evidence type="ECO:0000269" key="9">
    <source>
    </source>
</evidence>
<evidence type="ECO:0000269" key="10">
    <source>
    </source>
</evidence>
<evidence type="ECO:0000303" key="11">
    <source>
    </source>
</evidence>
<evidence type="ECO:0000303" key="12">
    <source>
    </source>
</evidence>
<evidence type="ECO:0000303" key="13">
    <source>
    </source>
</evidence>
<evidence type="ECO:0000305" key="14"/>
<evidence type="ECO:0000305" key="15">
    <source>
    </source>
</evidence>
<evidence type="ECO:0007744" key="16">
    <source>
    </source>
</evidence>
<evidence type="ECO:0007744" key="17">
    <source>
    </source>
</evidence>
<reference key="1">
    <citation type="journal article" date="1997" name="J. Cell. Biochem.">
        <title>Isolation, characterization, and chromosomal mapping of a novel cDNA clone encoding human selenium binding protein.</title>
        <authorList>
            <person name="Chang P.W.G."/>
            <person name="Tsui S.K.W."/>
            <person name="Liew C."/>
            <person name="Lee C."/>
            <person name="Waye M.M.Y."/>
            <person name="Fung K."/>
        </authorList>
    </citation>
    <scope>NUCLEOTIDE SEQUENCE [MRNA] (ISOFORM 1)</scope>
    <source>
        <tissue>Heart</tissue>
    </source>
</reference>
<reference key="2">
    <citation type="submission" date="2004-06" db="EMBL/GenBank/DDBJ databases">
        <title>Cloning of human full open reading frames in Gateway(TM) system entry vector (pDONR201).</title>
        <authorList>
            <person name="Ebert L."/>
            <person name="Schick M."/>
            <person name="Neubert P."/>
            <person name="Schatten R."/>
            <person name="Henze S."/>
            <person name="Korn B."/>
        </authorList>
    </citation>
    <scope>NUCLEOTIDE SEQUENCE [LARGE SCALE MRNA] (ISOFORM 1)</scope>
</reference>
<reference key="3">
    <citation type="journal article" date="2004" name="Nat. Genet.">
        <title>Complete sequencing and characterization of 21,243 full-length human cDNAs.</title>
        <authorList>
            <person name="Ota T."/>
            <person name="Suzuki Y."/>
            <person name="Nishikawa T."/>
            <person name="Otsuki T."/>
            <person name="Sugiyama T."/>
            <person name="Irie R."/>
            <person name="Wakamatsu A."/>
            <person name="Hayashi K."/>
            <person name="Sato H."/>
            <person name="Nagai K."/>
            <person name="Kimura K."/>
            <person name="Makita H."/>
            <person name="Sekine M."/>
            <person name="Obayashi M."/>
            <person name="Nishi T."/>
            <person name="Shibahara T."/>
            <person name="Tanaka T."/>
            <person name="Ishii S."/>
            <person name="Yamamoto J."/>
            <person name="Saito K."/>
            <person name="Kawai Y."/>
            <person name="Isono Y."/>
            <person name="Nakamura Y."/>
            <person name="Nagahari K."/>
            <person name="Murakami K."/>
            <person name="Yasuda T."/>
            <person name="Iwayanagi T."/>
            <person name="Wagatsuma M."/>
            <person name="Shiratori A."/>
            <person name="Sudo H."/>
            <person name="Hosoiri T."/>
            <person name="Kaku Y."/>
            <person name="Kodaira H."/>
            <person name="Kondo H."/>
            <person name="Sugawara M."/>
            <person name="Takahashi M."/>
            <person name="Kanda K."/>
            <person name="Yokoi T."/>
            <person name="Furuya T."/>
            <person name="Kikkawa E."/>
            <person name="Omura Y."/>
            <person name="Abe K."/>
            <person name="Kamihara K."/>
            <person name="Katsuta N."/>
            <person name="Sato K."/>
            <person name="Tanikawa M."/>
            <person name="Yamazaki M."/>
            <person name="Ninomiya K."/>
            <person name="Ishibashi T."/>
            <person name="Yamashita H."/>
            <person name="Murakawa K."/>
            <person name="Fujimori K."/>
            <person name="Tanai H."/>
            <person name="Kimata M."/>
            <person name="Watanabe M."/>
            <person name="Hiraoka S."/>
            <person name="Chiba Y."/>
            <person name="Ishida S."/>
            <person name="Ono Y."/>
            <person name="Takiguchi S."/>
            <person name="Watanabe S."/>
            <person name="Yosida M."/>
            <person name="Hotuta T."/>
            <person name="Kusano J."/>
            <person name="Kanehori K."/>
            <person name="Takahashi-Fujii A."/>
            <person name="Hara H."/>
            <person name="Tanase T.-O."/>
            <person name="Nomura Y."/>
            <person name="Togiya S."/>
            <person name="Komai F."/>
            <person name="Hara R."/>
            <person name="Takeuchi K."/>
            <person name="Arita M."/>
            <person name="Imose N."/>
            <person name="Musashino K."/>
            <person name="Yuuki H."/>
            <person name="Oshima A."/>
            <person name="Sasaki N."/>
            <person name="Aotsuka S."/>
            <person name="Yoshikawa Y."/>
            <person name="Matsunawa H."/>
            <person name="Ichihara T."/>
            <person name="Shiohata N."/>
            <person name="Sano S."/>
            <person name="Moriya S."/>
            <person name="Momiyama H."/>
            <person name="Satoh N."/>
            <person name="Takami S."/>
            <person name="Terashima Y."/>
            <person name="Suzuki O."/>
            <person name="Nakagawa S."/>
            <person name="Senoh A."/>
            <person name="Mizoguchi H."/>
            <person name="Goto Y."/>
            <person name="Shimizu F."/>
            <person name="Wakebe H."/>
            <person name="Hishigaki H."/>
            <person name="Watanabe T."/>
            <person name="Sugiyama A."/>
            <person name="Takemoto M."/>
            <person name="Kawakami B."/>
            <person name="Yamazaki M."/>
            <person name="Watanabe K."/>
            <person name="Kumagai A."/>
            <person name="Itakura S."/>
            <person name="Fukuzumi Y."/>
            <person name="Fujimori Y."/>
            <person name="Komiyama M."/>
            <person name="Tashiro H."/>
            <person name="Tanigami A."/>
            <person name="Fujiwara T."/>
            <person name="Ono T."/>
            <person name="Yamada K."/>
            <person name="Fujii Y."/>
            <person name="Ozaki K."/>
            <person name="Hirao M."/>
            <person name="Ohmori Y."/>
            <person name="Kawabata A."/>
            <person name="Hikiji T."/>
            <person name="Kobatake N."/>
            <person name="Inagaki H."/>
            <person name="Ikema Y."/>
            <person name="Okamoto S."/>
            <person name="Okitani R."/>
            <person name="Kawakami T."/>
            <person name="Noguchi S."/>
            <person name="Itoh T."/>
            <person name="Shigeta K."/>
            <person name="Senba T."/>
            <person name="Matsumura K."/>
            <person name="Nakajima Y."/>
            <person name="Mizuno T."/>
            <person name="Morinaga M."/>
            <person name="Sasaki M."/>
            <person name="Togashi T."/>
            <person name="Oyama M."/>
            <person name="Hata H."/>
            <person name="Watanabe M."/>
            <person name="Komatsu T."/>
            <person name="Mizushima-Sugano J."/>
            <person name="Satoh T."/>
            <person name="Shirai Y."/>
            <person name="Takahashi Y."/>
            <person name="Nakagawa K."/>
            <person name="Okumura K."/>
            <person name="Nagase T."/>
            <person name="Nomura N."/>
            <person name="Kikuchi H."/>
            <person name="Masuho Y."/>
            <person name="Yamashita R."/>
            <person name="Nakai K."/>
            <person name="Yada T."/>
            <person name="Nakamura Y."/>
            <person name="Ohara O."/>
            <person name="Isogai T."/>
            <person name="Sugano S."/>
        </authorList>
    </citation>
    <scope>NUCLEOTIDE SEQUENCE [LARGE SCALE MRNA] (ISOFORMS 1; 3 AND 4)</scope>
    <source>
        <tissue>Colon</tissue>
        <tissue>Lung</tissue>
        <tissue>Synovial cell</tissue>
    </source>
</reference>
<reference key="4">
    <citation type="journal article" date="2006" name="Nature">
        <title>The DNA sequence and biological annotation of human chromosome 1.</title>
        <authorList>
            <person name="Gregory S.G."/>
            <person name="Barlow K.F."/>
            <person name="McLay K.E."/>
            <person name="Kaul R."/>
            <person name="Swarbreck D."/>
            <person name="Dunham A."/>
            <person name="Scott C.E."/>
            <person name="Howe K.L."/>
            <person name="Woodfine K."/>
            <person name="Spencer C.C.A."/>
            <person name="Jones M.C."/>
            <person name="Gillson C."/>
            <person name="Searle S."/>
            <person name="Zhou Y."/>
            <person name="Kokocinski F."/>
            <person name="McDonald L."/>
            <person name="Evans R."/>
            <person name="Phillips K."/>
            <person name="Atkinson A."/>
            <person name="Cooper R."/>
            <person name="Jones C."/>
            <person name="Hall R.E."/>
            <person name="Andrews T.D."/>
            <person name="Lloyd C."/>
            <person name="Ainscough R."/>
            <person name="Almeida J.P."/>
            <person name="Ambrose K.D."/>
            <person name="Anderson F."/>
            <person name="Andrew R.W."/>
            <person name="Ashwell R.I.S."/>
            <person name="Aubin K."/>
            <person name="Babbage A.K."/>
            <person name="Bagguley C.L."/>
            <person name="Bailey J."/>
            <person name="Beasley H."/>
            <person name="Bethel G."/>
            <person name="Bird C.P."/>
            <person name="Bray-Allen S."/>
            <person name="Brown J.Y."/>
            <person name="Brown A.J."/>
            <person name="Buckley D."/>
            <person name="Burton J."/>
            <person name="Bye J."/>
            <person name="Carder C."/>
            <person name="Chapman J.C."/>
            <person name="Clark S.Y."/>
            <person name="Clarke G."/>
            <person name="Clee C."/>
            <person name="Cobley V."/>
            <person name="Collier R.E."/>
            <person name="Corby N."/>
            <person name="Coville G.J."/>
            <person name="Davies J."/>
            <person name="Deadman R."/>
            <person name="Dunn M."/>
            <person name="Earthrowl M."/>
            <person name="Ellington A.G."/>
            <person name="Errington H."/>
            <person name="Frankish A."/>
            <person name="Frankland J."/>
            <person name="French L."/>
            <person name="Garner P."/>
            <person name="Garnett J."/>
            <person name="Gay L."/>
            <person name="Ghori M.R.J."/>
            <person name="Gibson R."/>
            <person name="Gilby L.M."/>
            <person name="Gillett W."/>
            <person name="Glithero R.J."/>
            <person name="Grafham D.V."/>
            <person name="Griffiths C."/>
            <person name="Griffiths-Jones S."/>
            <person name="Grocock R."/>
            <person name="Hammond S."/>
            <person name="Harrison E.S.I."/>
            <person name="Hart E."/>
            <person name="Haugen E."/>
            <person name="Heath P.D."/>
            <person name="Holmes S."/>
            <person name="Holt K."/>
            <person name="Howden P.J."/>
            <person name="Hunt A.R."/>
            <person name="Hunt S.E."/>
            <person name="Hunter G."/>
            <person name="Isherwood J."/>
            <person name="James R."/>
            <person name="Johnson C."/>
            <person name="Johnson D."/>
            <person name="Joy A."/>
            <person name="Kay M."/>
            <person name="Kershaw J.K."/>
            <person name="Kibukawa M."/>
            <person name="Kimberley A.M."/>
            <person name="King A."/>
            <person name="Knights A.J."/>
            <person name="Lad H."/>
            <person name="Laird G."/>
            <person name="Lawlor S."/>
            <person name="Leongamornlert D.A."/>
            <person name="Lloyd D.M."/>
            <person name="Loveland J."/>
            <person name="Lovell J."/>
            <person name="Lush M.J."/>
            <person name="Lyne R."/>
            <person name="Martin S."/>
            <person name="Mashreghi-Mohammadi M."/>
            <person name="Matthews L."/>
            <person name="Matthews N.S.W."/>
            <person name="McLaren S."/>
            <person name="Milne S."/>
            <person name="Mistry S."/>
            <person name="Moore M.J.F."/>
            <person name="Nickerson T."/>
            <person name="O'Dell C.N."/>
            <person name="Oliver K."/>
            <person name="Palmeiri A."/>
            <person name="Palmer S.A."/>
            <person name="Parker A."/>
            <person name="Patel D."/>
            <person name="Pearce A.V."/>
            <person name="Peck A.I."/>
            <person name="Pelan S."/>
            <person name="Phelps K."/>
            <person name="Phillimore B.J."/>
            <person name="Plumb R."/>
            <person name="Rajan J."/>
            <person name="Raymond C."/>
            <person name="Rouse G."/>
            <person name="Saenphimmachak C."/>
            <person name="Sehra H.K."/>
            <person name="Sheridan E."/>
            <person name="Shownkeen R."/>
            <person name="Sims S."/>
            <person name="Skuce C.D."/>
            <person name="Smith M."/>
            <person name="Steward C."/>
            <person name="Subramanian S."/>
            <person name="Sycamore N."/>
            <person name="Tracey A."/>
            <person name="Tromans A."/>
            <person name="Van Helmond Z."/>
            <person name="Wall M."/>
            <person name="Wallis J.M."/>
            <person name="White S."/>
            <person name="Whitehead S.L."/>
            <person name="Wilkinson J.E."/>
            <person name="Willey D.L."/>
            <person name="Williams H."/>
            <person name="Wilming L."/>
            <person name="Wray P.W."/>
            <person name="Wu Z."/>
            <person name="Coulson A."/>
            <person name="Vaudin M."/>
            <person name="Sulston J.E."/>
            <person name="Durbin R.M."/>
            <person name="Hubbard T."/>
            <person name="Wooster R."/>
            <person name="Dunham I."/>
            <person name="Carter N.P."/>
            <person name="McVean G."/>
            <person name="Ross M.T."/>
            <person name="Harrow J."/>
            <person name="Olson M.V."/>
            <person name="Beck S."/>
            <person name="Rogers J."/>
            <person name="Bentley D.R."/>
        </authorList>
    </citation>
    <scope>NUCLEOTIDE SEQUENCE [LARGE SCALE GENOMIC DNA]</scope>
</reference>
<reference key="5">
    <citation type="submission" date="2005-09" db="EMBL/GenBank/DDBJ databases">
        <authorList>
            <person name="Mural R.J."/>
            <person name="Istrail S."/>
            <person name="Sutton G.G."/>
            <person name="Florea L."/>
            <person name="Halpern A.L."/>
            <person name="Mobarry C.M."/>
            <person name="Lippert R."/>
            <person name="Walenz B."/>
            <person name="Shatkay H."/>
            <person name="Dew I."/>
            <person name="Miller J.R."/>
            <person name="Flanigan M.J."/>
            <person name="Edwards N.J."/>
            <person name="Bolanos R."/>
            <person name="Fasulo D."/>
            <person name="Halldorsson B.V."/>
            <person name="Hannenhalli S."/>
            <person name="Turner R."/>
            <person name="Yooseph S."/>
            <person name="Lu F."/>
            <person name="Nusskern D.R."/>
            <person name="Shue B.C."/>
            <person name="Zheng X.H."/>
            <person name="Zhong F."/>
            <person name="Delcher A.L."/>
            <person name="Huson D.H."/>
            <person name="Kravitz S.A."/>
            <person name="Mouchard L."/>
            <person name="Reinert K."/>
            <person name="Remington K.A."/>
            <person name="Clark A.G."/>
            <person name="Waterman M.S."/>
            <person name="Eichler E.E."/>
            <person name="Adams M.D."/>
            <person name="Hunkapiller M.W."/>
            <person name="Myers E.W."/>
            <person name="Venter J.C."/>
        </authorList>
    </citation>
    <scope>NUCLEOTIDE SEQUENCE [LARGE SCALE GENOMIC DNA]</scope>
</reference>
<reference key="6">
    <citation type="journal article" date="2004" name="Genome Res.">
        <title>The status, quality, and expansion of the NIH full-length cDNA project: the Mammalian Gene Collection (MGC).</title>
        <authorList>
            <consortium name="The MGC Project Team"/>
        </authorList>
    </citation>
    <scope>NUCLEOTIDE SEQUENCE [LARGE SCALE MRNA] (ISOFORMS 1 AND 2)</scope>
    <source>
        <tissue>Colon</tissue>
        <tissue>Testis</tissue>
    </source>
</reference>
<reference key="7">
    <citation type="submission" date="2007-03" db="UniProtKB">
        <authorList>
            <person name="Lubec G."/>
            <person name="Vishwanath V."/>
        </authorList>
    </citation>
    <scope>PROTEIN SEQUENCE OF 255-276</scope>
    <scope>IDENTIFICATION BY MASS SPECTROMETRY</scope>
    <source>
        <tissue>Brain</tissue>
        <tissue>Cajal-Retzius cell</tissue>
    </source>
</reference>
<reference key="8">
    <citation type="journal article" date="1998" name="Cancer Res.">
        <title>Differential expression and androgen regulation of the human selenium-binding protein gene hSP56 in prostate cancer cells.</title>
        <authorList>
            <person name="Yang M."/>
            <person name="Sytkowski A.J."/>
        </authorList>
    </citation>
    <scope>TISSUE SPECIFICITY</scope>
    <scope>INDUCTION</scope>
</reference>
<reference key="9">
    <citation type="journal article" date="2004" name="J. Pathol.">
        <title>Reduced selenium-binding protein 1 expression is associated with poor outcome in lung adenocarcinomas.</title>
        <authorList>
            <person name="Chen G."/>
            <person name="Wang H."/>
            <person name="Miller C.T."/>
            <person name="Thomas D.G."/>
            <person name="Gharib T.G."/>
            <person name="Misek D.E."/>
            <person name="Giordano T.J."/>
            <person name="Orringer M.B."/>
            <person name="Hanash S.M."/>
            <person name="Beer D.G."/>
        </authorList>
    </citation>
    <scope>TISSUE SPECIFICITY</scope>
    <scope>SUBCELLULAR LOCATION</scope>
    <scope>PHOSPHORYLATION</scope>
    <scope>IDENTIFICATION BY MASS SPECTROMETRY</scope>
</reference>
<reference key="10">
    <citation type="journal article" date="2005" name="Proc. Natl. Acad. Sci. U.S.A.">
        <title>Comparative gene expression analysis of blood and brain provides concurrent validation of SELENBP1 up-regulation in schizophrenia.</title>
        <authorList>
            <person name="Glatt S.J."/>
            <person name="Everall I.P."/>
            <person name="Kremen W.S."/>
            <person name="Corbeil J."/>
            <person name="Sasik R."/>
            <person name="Khanlou N."/>
            <person name="Han M."/>
            <person name="Liew C.-C."/>
            <person name="Tsuang M.T."/>
        </authorList>
    </citation>
    <scope>TISSUE SPECIFICITY</scope>
    <scope>SUBCELLULAR LOCATION</scope>
</reference>
<reference key="11">
    <citation type="journal article" date="2006" name="Int. J. Cancer">
        <title>Selenium binding protein 1 in ovarian cancer.</title>
        <authorList>
            <person name="Huang K.-C."/>
            <person name="Park D.C."/>
            <person name="Ng S.-K."/>
            <person name="Lee J.Y."/>
            <person name="Ni X."/>
            <person name="Ng W.-C."/>
            <person name="Bandera C.A."/>
            <person name="Welch W.R."/>
            <person name="Berkowitz R.S."/>
            <person name="Mok S.C."/>
            <person name="Ng S.-W."/>
        </authorList>
    </citation>
    <scope>TISSUE SPECIFICITY</scope>
    <scope>IDENTIFICATION BY MASS SPECTROMETRY</scope>
</reference>
<reference key="12">
    <citation type="journal article" date="2006" name="Proteomics">
        <title>Suppression of human selenium-binding protein 1 is a late event in colorectal carcinogenesis and is associated with poor survival.</title>
        <authorList>
            <person name="Kim H."/>
            <person name="Kang H.J."/>
            <person name="You K.T."/>
            <person name="Kim S.H."/>
            <person name="Lee K.Y."/>
            <person name="Kim T.I."/>
            <person name="Kim C."/>
            <person name="Song S.Y."/>
            <person name="Kim H.-J."/>
            <person name="Lee C."/>
            <person name="Kim H."/>
        </authorList>
    </citation>
    <scope>TISSUE SPECIFICITY</scope>
    <scope>IDENTIFICATION BY MASS SPECTROMETRY</scope>
</reference>
<reference key="13">
    <citation type="journal article" date="2009" name="Biochem. Biophys. Res. Commun.">
        <title>Human selenium binding protein-1 (hSP56) interacts with VDU1 in a selenium-dependent manner.</title>
        <authorList>
            <person name="Jeong J.Y."/>
            <person name="Wang Y."/>
            <person name="Sytkowski A.J."/>
        </authorList>
    </citation>
    <scope>INTERACTION WITH USP33</scope>
</reference>
<reference key="14">
    <citation type="journal article" date="2011" name="BMC Syst. Biol.">
        <title>Initial characterization of the human central proteome.</title>
        <authorList>
            <person name="Burkard T.R."/>
            <person name="Planyavsky M."/>
            <person name="Kaupe I."/>
            <person name="Breitwieser F.P."/>
            <person name="Buerckstuemmer T."/>
            <person name="Bennett K.L."/>
            <person name="Superti-Furga G."/>
            <person name="Colinge J."/>
        </authorList>
    </citation>
    <scope>IDENTIFICATION BY MASS SPECTROMETRY [LARGE SCALE ANALYSIS]</scope>
</reference>
<reference key="15">
    <citation type="journal article" date="2012" name="Proc. Natl. Acad. Sci. U.S.A.">
        <title>N-terminal acetylome analyses and functional insights of the N-terminal acetyltransferase NatB.</title>
        <authorList>
            <person name="Van Damme P."/>
            <person name="Lasa M."/>
            <person name="Polevoda B."/>
            <person name="Gazquez C."/>
            <person name="Elosegui-Artola A."/>
            <person name="Kim D.S."/>
            <person name="De Juan-Pardo E."/>
            <person name="Demeyer K."/>
            <person name="Hole K."/>
            <person name="Larrea E."/>
            <person name="Timmerman E."/>
            <person name="Prieto J."/>
            <person name="Arnesen T."/>
            <person name="Sherman F."/>
            <person name="Gevaert K."/>
            <person name="Aldabe R."/>
        </authorList>
    </citation>
    <scope>ACETYLATION [LARGE SCALE ANALYSIS] AT ALA-2</scope>
    <scope>CLEAVAGE OF INITIATOR METHIONINE [LARGE SCALE ANALYSIS]</scope>
    <scope>IDENTIFICATION BY MASS SPECTROMETRY [LARGE SCALE ANALYSIS]</scope>
</reference>
<reference key="16">
    <citation type="journal article" date="2014" name="J. Proteomics">
        <title>An enzyme assisted RP-RPLC approach for in-depth analysis of human liver phosphoproteome.</title>
        <authorList>
            <person name="Bian Y."/>
            <person name="Song C."/>
            <person name="Cheng K."/>
            <person name="Dong M."/>
            <person name="Wang F."/>
            <person name="Huang J."/>
            <person name="Sun D."/>
            <person name="Wang L."/>
            <person name="Ye M."/>
            <person name="Zou H."/>
        </authorList>
    </citation>
    <scope>PHOSPHORYLATION [LARGE SCALE ANALYSIS] AT SER-111 AND SER-371</scope>
    <scope>IDENTIFICATION BY MASS SPECTROMETRY [LARGE SCALE ANALYSIS]</scope>
    <source>
        <tissue>Liver</tissue>
    </source>
</reference>
<reference key="17">
    <citation type="journal article" date="2018" name="Nat. Genet.">
        <title>Mutations in SELENBP1, encoding a novel human methanethiol oxidase, cause extraoral halitosis.</title>
        <authorList>
            <person name="Pol A."/>
            <person name="Renkema G.H."/>
            <person name="Tangerman A."/>
            <person name="Winkel E.G."/>
            <person name="Engelke U.F."/>
            <person name="de Brouwer A.P.M."/>
            <person name="Lloyd K.C."/>
            <person name="Araiza R.S."/>
            <person name="van den Heuvel L."/>
            <person name="Omran H."/>
            <person name="Olbrich H."/>
            <person name="Oude Elberink M."/>
            <person name="Gilissen C."/>
            <person name="Rodenburg R.J."/>
            <person name="Sass J.O."/>
            <person name="Schwab K.O."/>
            <person name="Schaefer H."/>
            <person name="Venselaar H."/>
            <person name="Sequeira J.S."/>
            <person name="Op den Camp H.J.M."/>
            <person name="Wevers R.A."/>
        </authorList>
    </citation>
    <scope>FUNCTION</scope>
    <scope>CATALYTIC ACTIVITY</scope>
    <scope>PATHWAY</scope>
    <scope>TISSUE SPECIFICITY</scope>
    <scope>INVOLVEMENT IN EHMTO</scope>
    <scope>VARIANTS EHMTO TRP-225; TYR-329 AND 347-GLY--ILE-472 DEL</scope>
    <scope>CHARACTERIZATION OF VARIANTS EHMTO TRP-225; TYR-329 AND 347-GLY--ILE-472 DEL</scope>
    <scope>BIOPHYSICOCHEMICAL PROPERTIES</scope>
</reference>
<keyword id="KW-0007">Acetylation</keyword>
<keyword id="KW-0025">Alternative splicing</keyword>
<keyword id="KW-0963">Cytoplasm</keyword>
<keyword id="KW-0903">Direct protein sequencing</keyword>
<keyword id="KW-0225">Disease variant</keyword>
<keyword id="KW-0472">Membrane</keyword>
<keyword id="KW-0539">Nucleus</keyword>
<keyword id="KW-0560">Oxidoreductase</keyword>
<keyword id="KW-0597">Phosphoprotein</keyword>
<keyword id="KW-0653">Protein transport</keyword>
<keyword id="KW-1267">Proteomics identification</keyword>
<keyword id="KW-1185">Reference proteome</keyword>
<keyword id="KW-0711">Selenium</keyword>
<keyword id="KW-0813">Transport</keyword>
<dbReference type="EC" id="1.8.3.4" evidence="9"/>
<dbReference type="EMBL" id="U29091">
    <property type="protein sequence ID" value="AAB02395.1"/>
    <property type="molecule type" value="mRNA"/>
</dbReference>
<dbReference type="EMBL" id="CR456852">
    <property type="protein sequence ID" value="CAG33133.1"/>
    <property type="molecule type" value="mRNA"/>
</dbReference>
<dbReference type="EMBL" id="AK296661">
    <property type="protein sequence ID" value="BAG59258.1"/>
    <property type="molecule type" value="mRNA"/>
</dbReference>
<dbReference type="EMBL" id="AK303815">
    <property type="protein sequence ID" value="BAG64765.1"/>
    <property type="molecule type" value="mRNA"/>
</dbReference>
<dbReference type="EMBL" id="AK315643">
    <property type="protein sequence ID" value="BAG38010.1"/>
    <property type="molecule type" value="mRNA"/>
</dbReference>
<dbReference type="EMBL" id="AL391069">
    <property type="status" value="NOT_ANNOTATED_CDS"/>
    <property type="molecule type" value="Genomic_DNA"/>
</dbReference>
<dbReference type="EMBL" id="CH471121">
    <property type="protein sequence ID" value="EAW53443.1"/>
    <property type="molecule type" value="Genomic_DNA"/>
</dbReference>
<dbReference type="EMBL" id="CH471121">
    <property type="protein sequence ID" value="EAW53445.1"/>
    <property type="molecule type" value="Genomic_DNA"/>
</dbReference>
<dbReference type="EMBL" id="BC009084">
    <property type="protein sequence ID" value="AAH09084.1"/>
    <property type="molecule type" value="mRNA"/>
</dbReference>
<dbReference type="EMBL" id="BC032997">
    <property type="protein sequence ID" value="AAH32997.1"/>
    <property type="molecule type" value="mRNA"/>
</dbReference>
<dbReference type="CCDS" id="CCDS58027.1">
    <molecule id="Q13228-3"/>
</dbReference>
<dbReference type="CCDS" id="CCDS60266.1">
    <molecule id="Q13228-4"/>
</dbReference>
<dbReference type="CCDS" id="CCDS995.1">
    <molecule id="Q13228-1"/>
</dbReference>
<dbReference type="PIR" id="G01872">
    <property type="entry name" value="G01872"/>
</dbReference>
<dbReference type="RefSeq" id="NP_001245217.1">
    <molecule id="Q13228-3"/>
    <property type="nucleotide sequence ID" value="NM_001258288.2"/>
</dbReference>
<dbReference type="RefSeq" id="NP_001245218.1">
    <molecule id="Q13228-4"/>
    <property type="nucleotide sequence ID" value="NM_001258289.2"/>
</dbReference>
<dbReference type="RefSeq" id="NP_003935.2">
    <molecule id="Q13228-1"/>
    <property type="nucleotide sequence ID" value="NM_003944.3"/>
</dbReference>
<dbReference type="SMR" id="Q13228"/>
<dbReference type="BioGRID" id="114472">
    <property type="interactions" value="211"/>
</dbReference>
<dbReference type="CORUM" id="Q13228"/>
<dbReference type="FunCoup" id="Q13228">
    <property type="interactions" value="548"/>
</dbReference>
<dbReference type="IntAct" id="Q13228">
    <property type="interactions" value="103"/>
</dbReference>
<dbReference type="MINT" id="Q13228"/>
<dbReference type="STRING" id="9606.ENSP00000397261"/>
<dbReference type="GlyGen" id="Q13228">
    <property type="glycosylation" value="3 sites, 1 O-linked glycan (1 site)"/>
</dbReference>
<dbReference type="iPTMnet" id="Q13228"/>
<dbReference type="PhosphoSitePlus" id="Q13228"/>
<dbReference type="SwissPalm" id="Q13228"/>
<dbReference type="BioMuta" id="SELENBP1"/>
<dbReference type="DMDM" id="148840437"/>
<dbReference type="REPRODUCTION-2DPAGE" id="IPI00012303"/>
<dbReference type="REPRODUCTION-2DPAGE" id="Q13228"/>
<dbReference type="jPOST" id="Q13228"/>
<dbReference type="MassIVE" id="Q13228"/>
<dbReference type="PaxDb" id="9606-ENSP00000397261"/>
<dbReference type="PeptideAtlas" id="Q13228"/>
<dbReference type="ProteomicsDB" id="1722"/>
<dbReference type="ProteomicsDB" id="5753"/>
<dbReference type="ProteomicsDB" id="59234">
    <molecule id="Q13228-1"/>
</dbReference>
<dbReference type="ProteomicsDB" id="59235">
    <molecule id="Q13228-2"/>
</dbReference>
<dbReference type="Pumba" id="Q13228"/>
<dbReference type="Antibodypedia" id="1584">
    <property type="antibodies" value="393 antibodies from 30 providers"/>
</dbReference>
<dbReference type="DNASU" id="8991"/>
<dbReference type="Ensembl" id="ENST00000368868.10">
    <molecule id="Q13228-1"/>
    <property type="protein sequence ID" value="ENSP00000357861.5"/>
    <property type="gene ID" value="ENSG00000143416.21"/>
</dbReference>
<dbReference type="Ensembl" id="ENST00000426705.6">
    <molecule id="Q13228-4"/>
    <property type="protein sequence ID" value="ENSP00000397261.2"/>
    <property type="gene ID" value="ENSG00000143416.21"/>
</dbReference>
<dbReference type="Ensembl" id="ENST00000447402.7">
    <molecule id="Q13228-3"/>
    <property type="protein sequence ID" value="ENSP00000413960.3"/>
    <property type="gene ID" value="ENSG00000143416.21"/>
</dbReference>
<dbReference type="GeneID" id="8991"/>
<dbReference type="KEGG" id="hsa:8991"/>
<dbReference type="MANE-Select" id="ENST00000368868.10">
    <property type="protein sequence ID" value="ENSP00000357861.5"/>
    <property type="RefSeq nucleotide sequence ID" value="NM_003944.4"/>
    <property type="RefSeq protein sequence ID" value="NP_003935.2"/>
</dbReference>
<dbReference type="UCSC" id="uc010pcy.4">
    <molecule id="Q13228-1"/>
    <property type="organism name" value="human"/>
</dbReference>
<dbReference type="AGR" id="HGNC:10719"/>
<dbReference type="CTD" id="8991"/>
<dbReference type="DisGeNET" id="8991"/>
<dbReference type="GeneCards" id="SELENBP1"/>
<dbReference type="HGNC" id="HGNC:10719">
    <property type="gene designation" value="SELENBP1"/>
</dbReference>
<dbReference type="HPA" id="ENSG00000143416">
    <property type="expression patterns" value="Tissue enhanced (intestine)"/>
</dbReference>
<dbReference type="MalaCards" id="SELENBP1"/>
<dbReference type="MIM" id="604188">
    <property type="type" value="gene"/>
</dbReference>
<dbReference type="MIM" id="618148">
    <property type="type" value="phenotype"/>
</dbReference>
<dbReference type="neXtProt" id="NX_Q13228"/>
<dbReference type="OpenTargets" id="ENSG00000143416"/>
<dbReference type="Orphanet" id="562538">
    <property type="disease" value="Autosomal recessive extra-oral halitosis"/>
</dbReference>
<dbReference type="PharmGKB" id="PA35641"/>
<dbReference type="VEuPathDB" id="HostDB:ENSG00000143416"/>
<dbReference type="eggNOG" id="KOG0918">
    <property type="taxonomic scope" value="Eukaryota"/>
</dbReference>
<dbReference type="GeneTree" id="ENSGT00390000014244"/>
<dbReference type="HOGENOM" id="CLU_032512_0_0_1"/>
<dbReference type="InParanoid" id="Q13228"/>
<dbReference type="OMA" id="AYDFWWH"/>
<dbReference type="OrthoDB" id="10252446at2759"/>
<dbReference type="PAN-GO" id="Q13228">
    <property type="GO annotations" value="0 GO annotations based on evolutionary models"/>
</dbReference>
<dbReference type="PhylomeDB" id="Q13228"/>
<dbReference type="TreeFam" id="TF315241"/>
<dbReference type="PathwayCommons" id="Q13228"/>
<dbReference type="SABIO-RK" id="Q13228"/>
<dbReference type="SignaLink" id="Q13228"/>
<dbReference type="BioGRID-ORCS" id="8991">
    <property type="hits" value="20 hits in 1164 CRISPR screens"/>
</dbReference>
<dbReference type="ChiTaRS" id="SELENBP1">
    <property type="organism name" value="human"/>
</dbReference>
<dbReference type="GeneWiki" id="SELENBP1"/>
<dbReference type="GenomeRNAi" id="8991"/>
<dbReference type="Pharos" id="Q13228">
    <property type="development level" value="Tbio"/>
</dbReference>
<dbReference type="PRO" id="PR:Q13228"/>
<dbReference type="Proteomes" id="UP000005640">
    <property type="component" value="Chromosome 1"/>
</dbReference>
<dbReference type="RNAct" id="Q13228">
    <property type="molecule type" value="protein"/>
</dbReference>
<dbReference type="Bgee" id="ENSG00000143416">
    <property type="expression patterns" value="Expressed in mucosa of transverse colon and 202 other cell types or tissues"/>
</dbReference>
<dbReference type="ExpressionAtlas" id="Q13228">
    <property type="expression patterns" value="baseline and differential"/>
</dbReference>
<dbReference type="GO" id="GO:0005829">
    <property type="term" value="C:cytosol"/>
    <property type="evidence" value="ECO:0007669"/>
    <property type="project" value="UniProtKB-SubCell"/>
</dbReference>
<dbReference type="GO" id="GO:0070062">
    <property type="term" value="C:extracellular exosome"/>
    <property type="evidence" value="ECO:0007005"/>
    <property type="project" value="UniProtKB"/>
</dbReference>
<dbReference type="GO" id="GO:0005615">
    <property type="term" value="C:extracellular space"/>
    <property type="evidence" value="ECO:0007005"/>
    <property type="project" value="UniProtKB"/>
</dbReference>
<dbReference type="GO" id="GO:0001650">
    <property type="term" value="C:fibrillar center"/>
    <property type="evidence" value="ECO:0000314"/>
    <property type="project" value="HPA"/>
</dbReference>
<dbReference type="GO" id="GO:0016020">
    <property type="term" value="C:membrane"/>
    <property type="evidence" value="ECO:0007669"/>
    <property type="project" value="UniProtKB-SubCell"/>
</dbReference>
<dbReference type="GO" id="GO:0005730">
    <property type="term" value="C:nucleolus"/>
    <property type="evidence" value="ECO:0000314"/>
    <property type="project" value="HPA"/>
</dbReference>
<dbReference type="GO" id="GO:0018549">
    <property type="term" value="F:methanethiol oxidase activity"/>
    <property type="evidence" value="ECO:0000315"/>
    <property type="project" value="FlyBase"/>
</dbReference>
<dbReference type="GO" id="GO:0008430">
    <property type="term" value="F:selenium binding"/>
    <property type="evidence" value="ECO:0000304"/>
    <property type="project" value="ProtInc"/>
</dbReference>
<dbReference type="GO" id="GO:0015031">
    <property type="term" value="P:protein transport"/>
    <property type="evidence" value="ECO:0007669"/>
    <property type="project" value="UniProtKB-KW"/>
</dbReference>
<dbReference type="InterPro" id="IPR008826">
    <property type="entry name" value="Se-bd"/>
</dbReference>
<dbReference type="PANTHER" id="PTHR23300">
    <property type="entry name" value="METHANETHIOL OXIDASE"/>
    <property type="match status" value="1"/>
</dbReference>
<dbReference type="PANTHER" id="PTHR23300:SF0">
    <property type="entry name" value="METHANETHIOL OXIDASE"/>
    <property type="match status" value="1"/>
</dbReference>
<dbReference type="Pfam" id="PF05694">
    <property type="entry name" value="SBP56"/>
    <property type="match status" value="1"/>
</dbReference>
<dbReference type="SUPFAM" id="SSF75011">
    <property type="entry name" value="3-carboxy-cis,cis-mucoante lactonizing enzyme"/>
    <property type="match status" value="1"/>
</dbReference>
<protein>
    <recommendedName>
        <fullName evidence="13">Methanethiol oxidase</fullName>
        <shortName evidence="13">MTO</shortName>
        <ecNumber evidence="9">1.8.3.4</ecNumber>
    </recommendedName>
    <alternativeName>
        <fullName>56 kDa selenium-binding protein</fullName>
        <shortName>SBP56</shortName>
        <shortName>SP56</shortName>
    </alternativeName>
    <alternativeName>
        <fullName>Selenium-binding protein 1</fullName>
    </alternativeName>
</protein>
<feature type="initiator methionine" description="Removed" evidence="16">
    <location>
        <position position="1"/>
    </location>
</feature>
<feature type="chain" id="PRO_0000174633" description="Methanethiol oxidase">
    <location>
        <begin position="2"/>
        <end position="472"/>
    </location>
</feature>
<feature type="modified residue" description="N-acetylalanine" evidence="16">
    <location>
        <position position="2"/>
    </location>
</feature>
<feature type="modified residue" description="Phosphoserine" evidence="17">
    <location>
        <position position="111"/>
    </location>
</feature>
<feature type="modified residue" description="Phosphoserine" evidence="17">
    <location>
        <position position="371"/>
    </location>
</feature>
<feature type="modified residue" description="Phosphoserine" evidence="2">
    <location>
        <position position="467"/>
    </location>
</feature>
<feature type="splice variant" id="VSP_038440" description="In isoform 2." evidence="12">
    <location>
        <begin position="1"/>
        <end position="64"/>
    </location>
</feature>
<feature type="splice variant" id="VSP_055126" description="In isoform 4." evidence="11">
    <original>M</original>
    <variation>MRLEWGPRPAALPWPAGMCAAERAEGAFTLQSVAQPMRPIAST</variation>
    <location>
        <position position="1"/>
    </location>
</feature>
<feature type="splice variant" id="VSP_045425" description="In isoform 3." evidence="11">
    <location>
        <begin position="59"/>
        <end position="120"/>
    </location>
</feature>
<feature type="sequence variant" id="VAR_080207" description="In EHMTO; loss of methanethiol oxidation in patient cells; dbSNP:rs758495626." evidence="9">
    <original>G</original>
    <variation>W</variation>
    <location>
        <position position="225"/>
    </location>
</feature>
<feature type="sequence variant" id="VAR_080208" description="In EHMTO; loss of methanethiol oxidation in patient cells; dbSNP:rs1553204840." evidence="9">
    <original>H</original>
    <variation>Y</variation>
    <location>
        <position position="329"/>
    </location>
</feature>
<feature type="sequence variant" id="VAR_080209" description="In EHMTO; loss of methanethiol oxidation in patient cells." evidence="9">
    <location>
        <begin position="347"/>
        <end position="472"/>
    </location>
</feature>
<feature type="sequence conflict" description="In Ref. 1; AAB02395." evidence="14" ref="1">
    <original>C</original>
    <variation>Y</variation>
    <location>
        <position position="80"/>
    </location>
</feature>
<feature type="sequence conflict" description="In Ref. 1; AAB02395." evidence="14" ref="1">
    <original>T</original>
    <variation>N</variation>
    <location>
        <position position="92"/>
    </location>
</feature>
<feature type="sequence conflict" description="In Ref. 1; AAB02395." evidence="14" ref="1">
    <original>RAP</original>
    <variation>GPQ</variation>
    <location>
        <begin position="114"/>
        <end position="116"/>
    </location>
</feature>
<feature type="sequence conflict" description="In Ref. 1; AAB02395." evidence="14" ref="1">
    <original>F</original>
    <variation>C</variation>
    <location>
        <position position="135"/>
    </location>
</feature>
<feature type="sequence conflict" description="In Ref. 1; AAB02395." evidence="14" ref="1">
    <original>DAA</original>
    <variation>SAT</variation>
    <location>
        <begin position="260"/>
        <end position="262"/>
    </location>
</feature>
<feature type="sequence conflict" description="In Ref. 1; AAB02395." evidence="14" ref="1">
    <original>LSST</original>
    <variation>SAPN</variation>
    <location>
        <begin position="270"/>
        <end position="273"/>
    </location>
</feature>
<feature type="sequence conflict" description="In Ref. 3; BAG59258." evidence="14" ref="3">
    <original>Y</original>
    <variation>C</variation>
    <location>
        <position position="278"/>
    </location>
</feature>
<feature type="sequence conflict" description="In Ref. 1; AAB02395." evidence="14" ref="1">
    <original>NEG</original>
    <variation>TRE</variation>
    <location>
        <begin position="280"/>
        <end position="282"/>
    </location>
</feature>
<feature type="sequence conflict" description="In Ref. 1; AAB02395." evidence="14" ref="1">
    <original>EM</original>
    <variation>GV</variation>
    <location>
        <begin position="305"/>
        <end position="306"/>
    </location>
</feature>
<feature type="sequence conflict" description="In Ref. 1; AAB02395." evidence="14" ref="1">
    <original>D</original>
    <variation>E</variation>
    <location>
        <position position="410"/>
    </location>
</feature>
<feature type="sequence conflict" description="In Ref. 1; AAB02395." evidence="14" ref="1">
    <original>F</original>
    <variation>C</variation>
    <location>
        <position position="442"/>
    </location>
</feature>
<proteinExistence type="evidence at protein level"/>
<accession>Q13228</accession>
<accession>A6NML9</accession>
<accession>A6PVW9</accession>
<accession>B2RDR3</accession>
<accession>B4DKP6</accession>
<accession>B4E1F3</accession>
<accession>Q49AQ8</accession>
<accession>Q96GX7</accession>
<gene>
    <name type="primary">SELENBP1</name>
    <name type="synonym">SBP</name>
</gene>
<organism>
    <name type="scientific">Homo sapiens</name>
    <name type="common">Human</name>
    <dbReference type="NCBI Taxonomy" id="9606"/>
    <lineage>
        <taxon>Eukaryota</taxon>
        <taxon>Metazoa</taxon>
        <taxon>Chordata</taxon>
        <taxon>Craniata</taxon>
        <taxon>Vertebrata</taxon>
        <taxon>Euteleostomi</taxon>
        <taxon>Mammalia</taxon>
        <taxon>Eutheria</taxon>
        <taxon>Euarchontoglires</taxon>
        <taxon>Primates</taxon>
        <taxon>Haplorrhini</taxon>
        <taxon>Catarrhini</taxon>
        <taxon>Hominidae</taxon>
        <taxon>Homo</taxon>
    </lineage>
</organism>
<sequence>MATKCGNCGPGYSTPLEAMKGPREEIVYLPCIYRNTGTEAPDYLATVDVDPKSPQYCQVIHRLPMPNLKDELHHSGWNTCSSCFGDSTKSRTKLVLPSLISSRIYVVDVGSEPRAPKLHKVIEPKDIHAKCELAFLHTSHCLASGEVMISSLGDVKGNGKGGFVLLDGETFEVKGTWERPGGAAPLGYDFWYQPRHNVMISTEWAAPNVLRDGFNPADVEAGLYGSHLYVWDWQRHEIVQTLSLKDGLIPLEIRFLHNPDAAQGFVGCALSSTIQRFYKNEGGTWSVEKVIQVPPKKVKGWLLPEMPGLITDILLSLDDRFLYFSNWLHGDLRQYDISDPQRPRLTGQLFLGGSIVKGGPVQVLEDEELKSQPEPLVVKGKRVAGGPQMIQLSLDGKRLYITTSLYSAWDKQFYPDLIREGSVMLQVDVDTVKGGLKLNPNFLVDFGKEPLGPALAHELRYPGGDCSSDIWI</sequence>